<dbReference type="EMBL" id="BC054593">
    <property type="protein sequence ID" value="AAH54593.1"/>
    <property type="molecule type" value="mRNA"/>
</dbReference>
<dbReference type="RefSeq" id="NP_956701.1">
    <property type="nucleotide sequence ID" value="NM_200407.1"/>
</dbReference>
<dbReference type="FunCoup" id="Q7T2D4">
    <property type="interactions" value="1479"/>
</dbReference>
<dbReference type="STRING" id="7955.ENSDARP00000068141"/>
<dbReference type="PaxDb" id="7955-ENSDARP00000068141"/>
<dbReference type="Ensembl" id="ENSDART00000073651">
    <property type="protein sequence ID" value="ENSDARP00000068141"/>
    <property type="gene ID" value="ENSDARG00000051936"/>
</dbReference>
<dbReference type="Ensembl" id="ENSDART00000180223">
    <property type="protein sequence ID" value="ENSDARP00000156218"/>
    <property type="gene ID" value="ENSDARG00000051936"/>
</dbReference>
<dbReference type="GeneID" id="393378"/>
<dbReference type="KEGG" id="dre:393378"/>
<dbReference type="AGR" id="ZFIN:ZDB-GENE-040426-1331"/>
<dbReference type="CTD" id="51290"/>
<dbReference type="ZFIN" id="ZDB-GENE-040426-1331">
    <property type="gene designation" value="ergic2"/>
</dbReference>
<dbReference type="eggNOG" id="KOG2667">
    <property type="taxonomic scope" value="Eukaryota"/>
</dbReference>
<dbReference type="HOGENOM" id="CLU_034705_4_1_1"/>
<dbReference type="InParanoid" id="Q7T2D4"/>
<dbReference type="OMA" id="MTNHYLR"/>
<dbReference type="OrthoDB" id="5541786at2759"/>
<dbReference type="PhylomeDB" id="Q7T2D4"/>
<dbReference type="TreeFam" id="TF317192"/>
<dbReference type="PRO" id="PR:Q7T2D4"/>
<dbReference type="Proteomes" id="UP000000437">
    <property type="component" value="Alternate scaffold 25"/>
</dbReference>
<dbReference type="Proteomes" id="UP000000437">
    <property type="component" value="Chromosome 25"/>
</dbReference>
<dbReference type="Bgee" id="ENSDARG00000051936">
    <property type="expression patterns" value="Expressed in muscle tissue and 21 other cell types or tissues"/>
</dbReference>
<dbReference type="ExpressionAtlas" id="Q7T2D4">
    <property type="expression patterns" value="baseline and differential"/>
</dbReference>
<dbReference type="GO" id="GO:0030134">
    <property type="term" value="C:COPII-coated ER to Golgi transport vesicle"/>
    <property type="evidence" value="ECO:0000318"/>
    <property type="project" value="GO_Central"/>
</dbReference>
<dbReference type="GO" id="GO:0005783">
    <property type="term" value="C:endoplasmic reticulum"/>
    <property type="evidence" value="ECO:0000318"/>
    <property type="project" value="GO_Central"/>
</dbReference>
<dbReference type="GO" id="GO:0005789">
    <property type="term" value="C:endoplasmic reticulum membrane"/>
    <property type="evidence" value="ECO:0007669"/>
    <property type="project" value="UniProtKB-SubCell"/>
</dbReference>
<dbReference type="GO" id="GO:0033116">
    <property type="term" value="C:endoplasmic reticulum-Golgi intermediate compartment membrane"/>
    <property type="evidence" value="ECO:0007669"/>
    <property type="project" value="UniProtKB-SubCell"/>
</dbReference>
<dbReference type="GO" id="GO:0005794">
    <property type="term" value="C:Golgi apparatus"/>
    <property type="evidence" value="ECO:0007669"/>
    <property type="project" value="UniProtKB-SubCell"/>
</dbReference>
<dbReference type="GO" id="GO:0016020">
    <property type="term" value="C:membrane"/>
    <property type="evidence" value="ECO:0000318"/>
    <property type="project" value="GO_Central"/>
</dbReference>
<dbReference type="GO" id="GO:0006888">
    <property type="term" value="P:endoplasmic reticulum to Golgi vesicle-mediated transport"/>
    <property type="evidence" value="ECO:0000318"/>
    <property type="project" value="GO_Central"/>
</dbReference>
<dbReference type="GO" id="GO:0006890">
    <property type="term" value="P:retrograde vesicle-mediated transport, Golgi to endoplasmic reticulum"/>
    <property type="evidence" value="ECO:0000318"/>
    <property type="project" value="GO_Central"/>
</dbReference>
<dbReference type="InterPro" id="IPR045888">
    <property type="entry name" value="Erv"/>
</dbReference>
<dbReference type="InterPro" id="IPR012936">
    <property type="entry name" value="Erv_C"/>
</dbReference>
<dbReference type="InterPro" id="IPR039542">
    <property type="entry name" value="Erv_N"/>
</dbReference>
<dbReference type="PANTHER" id="PTHR10984">
    <property type="entry name" value="ENDOPLASMIC RETICULUM-GOLGI INTERMEDIATE COMPARTMENT PROTEIN"/>
    <property type="match status" value="1"/>
</dbReference>
<dbReference type="PANTHER" id="PTHR10984:SF30">
    <property type="entry name" value="ENDOPLASMIC RETICULUM-GOLGI INTERMEDIATE COMPARTMENT PROTEIN 2"/>
    <property type="match status" value="1"/>
</dbReference>
<dbReference type="Pfam" id="PF07970">
    <property type="entry name" value="COPIIcoated_ERV"/>
    <property type="match status" value="1"/>
</dbReference>
<dbReference type="Pfam" id="PF13850">
    <property type="entry name" value="ERGIC_N"/>
    <property type="match status" value="1"/>
</dbReference>
<sequence>MRRLNKKKALNFVRELDAFPKVPESYVETTASGGTVSLLAFTAMALLAFFEFFVYRDTWMKYEYEVDKDFTSKLRINIDITVAMRCQFVGADVLDLAETMVASDGLVYEPVVFDLSPQQRLWHRTLLLIQGRLREEHSLQDVLFKNVMKGSPTALPPREDDPNQPLNACRIHGHLYVNKVAGNFHITVGKAIPHPRGHAHLAALVSHETYNFSHRIDHLSFGEEIPGILNPLDGTEKVSADHNQMFQYFITIVPTKLQTYKVYADTHQYSVTERERVINHAAGSHGVSGIFMKYDISSLMVKVTEQHMPFWQFLVRLCGIIGGIFSTTGMLHNLVGFCVDVVCCRFKLGVYKPKSMSDFDGQINSLTPLLSENAEQ</sequence>
<evidence type="ECO:0000250" key="1"/>
<evidence type="ECO:0000255" key="2"/>
<evidence type="ECO:0000305" key="3"/>
<organism>
    <name type="scientific">Danio rerio</name>
    <name type="common">Zebrafish</name>
    <name type="synonym">Brachydanio rerio</name>
    <dbReference type="NCBI Taxonomy" id="7955"/>
    <lineage>
        <taxon>Eukaryota</taxon>
        <taxon>Metazoa</taxon>
        <taxon>Chordata</taxon>
        <taxon>Craniata</taxon>
        <taxon>Vertebrata</taxon>
        <taxon>Euteleostomi</taxon>
        <taxon>Actinopterygii</taxon>
        <taxon>Neopterygii</taxon>
        <taxon>Teleostei</taxon>
        <taxon>Ostariophysi</taxon>
        <taxon>Cypriniformes</taxon>
        <taxon>Danionidae</taxon>
        <taxon>Danioninae</taxon>
        <taxon>Danio</taxon>
    </lineage>
</organism>
<protein>
    <recommendedName>
        <fullName>Endoplasmic reticulum-Golgi intermediate compartment protein 2</fullName>
    </recommendedName>
</protein>
<keyword id="KW-0256">Endoplasmic reticulum</keyword>
<keyword id="KW-0931">ER-Golgi transport</keyword>
<keyword id="KW-0333">Golgi apparatus</keyword>
<keyword id="KW-0472">Membrane</keyword>
<keyword id="KW-1185">Reference proteome</keyword>
<keyword id="KW-0812">Transmembrane</keyword>
<keyword id="KW-1133">Transmembrane helix</keyword>
<keyword id="KW-0813">Transport</keyword>
<comment type="function">
    <text evidence="1">Possible role in transport between endoplasmic reticulum and Golgi.</text>
</comment>
<comment type="subcellular location">
    <subcellularLocation>
        <location evidence="1">Endoplasmic reticulum-Golgi intermediate compartment membrane</location>
        <topology evidence="1">Multi-pass membrane protein</topology>
    </subcellularLocation>
    <subcellularLocation>
        <location evidence="1">Golgi apparatus</location>
        <location evidence="1">cis-Golgi network membrane</location>
        <topology evidence="1">Multi-pass membrane protein</topology>
    </subcellularLocation>
    <subcellularLocation>
        <location evidence="1">Endoplasmic reticulum membrane</location>
        <topology evidence="1">Multi-pass membrane protein</topology>
    </subcellularLocation>
</comment>
<comment type="similarity">
    <text evidence="3">Belongs to the ERGIC family.</text>
</comment>
<name>ERGI2_DANRE</name>
<proteinExistence type="evidence at transcript level"/>
<accession>Q7T2D4</accession>
<feature type="chain" id="PRO_0000239386" description="Endoplasmic reticulum-Golgi intermediate compartment protein 2">
    <location>
        <begin position="1"/>
        <end position="376"/>
    </location>
</feature>
<feature type="topological domain" description="Cytoplasmic" evidence="2">
    <location>
        <begin position="1"/>
        <end position="33"/>
    </location>
</feature>
<feature type="transmembrane region" description="Helical" evidence="2">
    <location>
        <begin position="34"/>
        <end position="54"/>
    </location>
</feature>
<feature type="topological domain" description="Lumenal" evidence="2">
    <location>
        <begin position="55"/>
        <end position="318"/>
    </location>
</feature>
<feature type="transmembrane region" description="Helical" evidence="2">
    <location>
        <begin position="319"/>
        <end position="339"/>
    </location>
</feature>
<feature type="topological domain" description="Cytoplasmic" evidence="2">
    <location>
        <begin position="340"/>
        <end position="376"/>
    </location>
</feature>
<reference key="1">
    <citation type="submission" date="2003-07" db="EMBL/GenBank/DDBJ databases">
        <authorList>
            <consortium name="NIH - Zebrafish Gene Collection (ZGC) project"/>
        </authorList>
    </citation>
    <scope>NUCLEOTIDE SEQUENCE [LARGE SCALE MRNA]</scope>
    <source>
        <tissue>Kidney</tissue>
    </source>
</reference>
<gene>
    <name type="primary">ergic2</name>
    <name type="ORF">zgc:64005</name>
</gene>